<protein>
    <recommendedName>
        <fullName>Acyl carrier protein AcpXL</fullName>
    </recommendedName>
</protein>
<keyword id="KW-0963">Cytoplasm</keyword>
<keyword id="KW-0275">Fatty acid biosynthesis</keyword>
<keyword id="KW-0276">Fatty acid metabolism</keyword>
<keyword id="KW-0441">Lipid A biosynthesis</keyword>
<keyword id="KW-0444">Lipid biosynthesis</keyword>
<keyword id="KW-0443">Lipid metabolism</keyword>
<keyword id="KW-0596">Phosphopantetheine</keyword>
<keyword id="KW-0597">Phosphoprotein</keyword>
<reference key="1">
    <citation type="journal article" date="2002" name="Proc. Natl. Acad. Sci. U.S.A.">
        <title>The Brucella suis genome reveals fundamental similarities between animal and plant pathogens and symbionts.</title>
        <authorList>
            <person name="Paulsen I.T."/>
            <person name="Seshadri R."/>
            <person name="Nelson K.E."/>
            <person name="Eisen J.A."/>
            <person name="Heidelberg J.F."/>
            <person name="Read T.D."/>
            <person name="Dodson R.J."/>
            <person name="Umayam L.A."/>
            <person name="Brinkac L.M."/>
            <person name="Beanan M.J."/>
            <person name="Daugherty S.C."/>
            <person name="DeBoy R.T."/>
            <person name="Durkin A.S."/>
            <person name="Kolonay J.F."/>
            <person name="Madupu R."/>
            <person name="Nelson W.C."/>
            <person name="Ayodeji B."/>
            <person name="Kraul M."/>
            <person name="Shetty J."/>
            <person name="Malek J.A."/>
            <person name="Van Aken S.E."/>
            <person name="Riedmuller S."/>
            <person name="Tettelin H."/>
            <person name="Gill S.R."/>
            <person name="White O."/>
            <person name="Salzberg S.L."/>
            <person name="Hoover D.L."/>
            <person name="Lindler L.E."/>
            <person name="Halling S.M."/>
            <person name="Boyle S.M."/>
            <person name="Fraser C.M."/>
        </authorList>
    </citation>
    <scope>NUCLEOTIDE SEQUENCE [LARGE SCALE GENOMIC DNA]</scope>
    <source>
        <strain>1330</strain>
    </source>
</reference>
<reference key="2">
    <citation type="journal article" date="2011" name="J. Bacteriol.">
        <title>Revised genome sequence of Brucella suis 1330.</title>
        <authorList>
            <person name="Tae H."/>
            <person name="Shallom S."/>
            <person name="Settlage R."/>
            <person name="Preston D."/>
            <person name="Adams L.G."/>
            <person name="Garner H.R."/>
        </authorList>
    </citation>
    <scope>NUCLEOTIDE SEQUENCE [LARGE SCALE GENOMIC DNA]</scope>
    <source>
        <strain>1330</strain>
    </source>
</reference>
<evidence type="ECO:0000250" key="1"/>
<evidence type="ECO:0000255" key="2">
    <source>
        <dbReference type="PROSITE-ProRule" id="PRU00258"/>
    </source>
</evidence>
<name>ACPXL_BRUSU</name>
<dbReference type="EMBL" id="AE014291">
    <property type="protein sequence ID" value="AAN29784.1"/>
    <property type="molecule type" value="Genomic_DNA"/>
</dbReference>
<dbReference type="EMBL" id="CP002997">
    <property type="protein sequence ID" value="AEM18201.1"/>
    <property type="molecule type" value="Genomic_DNA"/>
</dbReference>
<dbReference type="RefSeq" id="WP_002963985.1">
    <property type="nucleotide sequence ID" value="NZ_KN046804.1"/>
</dbReference>
<dbReference type="SMR" id="P63451"/>
<dbReference type="KEGG" id="bms:BR0855"/>
<dbReference type="KEGG" id="bsi:BS1330_I0851"/>
<dbReference type="PATRIC" id="fig|204722.21.peg.2590"/>
<dbReference type="HOGENOM" id="CLU_2234373_0_0_5"/>
<dbReference type="UniPathway" id="UPA00360"/>
<dbReference type="Proteomes" id="UP000007104">
    <property type="component" value="Chromosome I"/>
</dbReference>
<dbReference type="GO" id="GO:0005829">
    <property type="term" value="C:cytosol"/>
    <property type="evidence" value="ECO:0007669"/>
    <property type="project" value="TreeGrafter"/>
</dbReference>
<dbReference type="GO" id="GO:0016020">
    <property type="term" value="C:membrane"/>
    <property type="evidence" value="ECO:0007669"/>
    <property type="project" value="GOC"/>
</dbReference>
<dbReference type="GO" id="GO:0000035">
    <property type="term" value="F:acyl binding"/>
    <property type="evidence" value="ECO:0007669"/>
    <property type="project" value="TreeGrafter"/>
</dbReference>
<dbReference type="GO" id="GO:0000036">
    <property type="term" value="F:acyl carrier activity"/>
    <property type="evidence" value="ECO:0007669"/>
    <property type="project" value="TreeGrafter"/>
</dbReference>
<dbReference type="GO" id="GO:0036104">
    <property type="term" value="P:Kdo2-lipid A biosynthetic process"/>
    <property type="evidence" value="ECO:0007669"/>
    <property type="project" value="UniProtKB-UniPathway"/>
</dbReference>
<dbReference type="GO" id="GO:0009245">
    <property type="term" value="P:lipid A biosynthetic process"/>
    <property type="evidence" value="ECO:0007669"/>
    <property type="project" value="UniProtKB-KW"/>
</dbReference>
<dbReference type="Gene3D" id="1.10.1200.10">
    <property type="entry name" value="ACP-like"/>
    <property type="match status" value="1"/>
</dbReference>
<dbReference type="InterPro" id="IPR003231">
    <property type="entry name" value="ACP"/>
</dbReference>
<dbReference type="InterPro" id="IPR036736">
    <property type="entry name" value="ACP-like_sf"/>
</dbReference>
<dbReference type="InterPro" id="IPR009081">
    <property type="entry name" value="PP-bd_ACP"/>
</dbReference>
<dbReference type="InterPro" id="IPR006162">
    <property type="entry name" value="Ppantetheine_attach_site"/>
</dbReference>
<dbReference type="NCBIfam" id="NF005079">
    <property type="entry name" value="PRK06508.1"/>
    <property type="match status" value="1"/>
</dbReference>
<dbReference type="PANTHER" id="PTHR20863">
    <property type="entry name" value="ACYL CARRIER PROTEIN"/>
    <property type="match status" value="1"/>
</dbReference>
<dbReference type="PANTHER" id="PTHR20863:SF76">
    <property type="entry name" value="CARRIER DOMAIN-CONTAINING PROTEIN"/>
    <property type="match status" value="1"/>
</dbReference>
<dbReference type="Pfam" id="PF00550">
    <property type="entry name" value="PP-binding"/>
    <property type="match status" value="1"/>
</dbReference>
<dbReference type="SUPFAM" id="SSF47336">
    <property type="entry name" value="ACP-like"/>
    <property type="match status" value="1"/>
</dbReference>
<dbReference type="PROSITE" id="PS50075">
    <property type="entry name" value="CARRIER"/>
    <property type="match status" value="1"/>
</dbReference>
<dbReference type="PROSITE" id="PS00012">
    <property type="entry name" value="PHOSPHOPANTETHEINE"/>
    <property type="match status" value="1"/>
</dbReference>
<organism>
    <name type="scientific">Brucella suis biovar 1 (strain 1330)</name>
    <dbReference type="NCBI Taxonomy" id="204722"/>
    <lineage>
        <taxon>Bacteria</taxon>
        <taxon>Pseudomonadati</taxon>
        <taxon>Pseudomonadota</taxon>
        <taxon>Alphaproteobacteria</taxon>
        <taxon>Hyphomicrobiales</taxon>
        <taxon>Brucellaceae</taxon>
        <taxon>Brucella/Ochrobactrum group</taxon>
        <taxon>Brucella</taxon>
    </lineage>
</organism>
<sequence length="93" mass="10361">MSSTFDKVADIIAETSEIDRDTITPESHTIDDLGIDSLDFLDIVFAIDKAFGIKIPLEQWTQEVNEGKVPTEEYFVLKNLCAKIDELVAAKKG</sequence>
<proteinExistence type="inferred from homology"/>
<gene>
    <name type="primary">acpXL</name>
    <name type="ordered locus">BR0855</name>
    <name type="ordered locus">BS1330_I0851</name>
</gene>
<feature type="chain" id="PRO_0000180238" description="Acyl carrier protein AcpXL">
    <location>
        <begin position="1"/>
        <end position="93"/>
    </location>
</feature>
<feature type="domain" description="Carrier" evidence="2">
    <location>
        <begin position="2"/>
        <end position="88"/>
    </location>
</feature>
<feature type="modified residue" description="O-(pantetheine 4'-phosphoryl)serine" evidence="2">
    <location>
        <position position="37"/>
    </location>
</feature>
<accession>P63451</accession>
<accession>G0K984</accession>
<accession>Q8YGP7</accession>
<comment type="function">
    <text evidence="1">Carrier of the growing fatty acid chain in fatty acid biosynthesis. Is involved in the transfer of long hydroxylated fatty acids to lipid A (By similarity).</text>
</comment>
<comment type="pathway">
    <text>Glycolipid biosynthesis; KDO(2)-lipid A biosynthesis.</text>
</comment>
<comment type="subcellular location">
    <subcellularLocation>
        <location evidence="1">Cytoplasm</location>
    </subcellularLocation>
</comment>
<comment type="PTM">
    <text evidence="1">4'-phosphopantetheine is transferred from CoA to a specific serine of apo-ACP by AcpS. This modification is essential for activity because fatty acids are bound in thioester linkage to the sulfhydryl of the prosthetic group (By similarity).</text>
</comment>